<accession>Q62147</accession>
<accession>Q60594</accession>
<protein>
    <recommendedName>
        <fullName>Sarcospan</fullName>
    </recommendedName>
    <alternativeName>
        <fullName>K-ras oncogene-associated protein</fullName>
    </alternativeName>
    <alternativeName>
        <fullName>Kirsten-Ras-associated protein</fullName>
    </alternativeName>
</protein>
<name>SSPN_MOUSE</name>
<sequence length="216" mass="23859">MGRKPSPRAQELPEEEARTCCGCRFPLLLALLQLALGIAVTVLGFLMASISPSLLVRDTPFWAGSIVCVVAYLGLFMLCVSYQVDERTCVQFSMKVFYFLLSALGLMVCMLAVAFAAHHYSLLAQFTCETSLDSCQCKLPSSEPLSRAFVYRDVTDCTSVTGTFKLFLIIQMVLNLVCGLVCLLACFVMWKHRYQVFYVGVGLRSLMASDGQLPKA</sequence>
<organism>
    <name type="scientific">Mus musculus</name>
    <name type="common">Mouse</name>
    <dbReference type="NCBI Taxonomy" id="10090"/>
    <lineage>
        <taxon>Eukaryota</taxon>
        <taxon>Metazoa</taxon>
        <taxon>Chordata</taxon>
        <taxon>Craniata</taxon>
        <taxon>Vertebrata</taxon>
        <taxon>Euteleostomi</taxon>
        <taxon>Mammalia</taxon>
        <taxon>Eutheria</taxon>
        <taxon>Euarchontoglires</taxon>
        <taxon>Glires</taxon>
        <taxon>Rodentia</taxon>
        <taxon>Myomorpha</taxon>
        <taxon>Muroidea</taxon>
        <taxon>Muridae</taxon>
        <taxon>Murinae</taxon>
        <taxon>Mus</taxon>
        <taxon>Mus</taxon>
    </lineage>
</organism>
<dbReference type="EMBL" id="U02486">
    <property type="protein sequence ID" value="AAB60682.1"/>
    <property type="molecule type" value="Genomic_DNA"/>
</dbReference>
<dbReference type="EMBL" id="U02484">
    <property type="protein sequence ID" value="AAB60682.1"/>
    <property type="status" value="JOINED"/>
    <property type="molecule type" value="Genomic_DNA"/>
</dbReference>
<dbReference type="EMBL" id="U02485">
    <property type="protein sequence ID" value="AAB60682.1"/>
    <property type="status" value="JOINED"/>
    <property type="molecule type" value="Genomic_DNA"/>
</dbReference>
<dbReference type="EMBL" id="U02487">
    <property type="protein sequence ID" value="AAA03712.1"/>
    <property type="molecule type" value="mRNA"/>
</dbReference>
<dbReference type="CCDS" id="CCDS20698.1"/>
<dbReference type="PIR" id="A54305">
    <property type="entry name" value="A54305"/>
</dbReference>
<dbReference type="RefSeq" id="NP_034786.1">
    <property type="nucleotide sequence ID" value="NM_010656.2"/>
</dbReference>
<dbReference type="PDB" id="8YT8">
    <property type="method" value="EM"/>
    <property type="resolution" value="3.50 A"/>
    <property type="chains" value="S=23-201"/>
</dbReference>
<dbReference type="PDBsum" id="8YT8"/>
<dbReference type="EMDB" id="EMD-39568"/>
<dbReference type="SMR" id="Q62147"/>
<dbReference type="BioGRID" id="201011">
    <property type="interactions" value="1"/>
</dbReference>
<dbReference type="CORUM" id="Q62147"/>
<dbReference type="FunCoup" id="Q62147">
    <property type="interactions" value="554"/>
</dbReference>
<dbReference type="STRING" id="10090.ENSMUSP00000032383"/>
<dbReference type="iPTMnet" id="Q62147"/>
<dbReference type="PhosphoSitePlus" id="Q62147"/>
<dbReference type="PaxDb" id="10090-ENSMUSP00000032383"/>
<dbReference type="ProteomicsDB" id="258743"/>
<dbReference type="DNASU" id="16651"/>
<dbReference type="GeneID" id="16651"/>
<dbReference type="KEGG" id="mmu:16651"/>
<dbReference type="AGR" id="MGI:1353511"/>
<dbReference type="CTD" id="8082"/>
<dbReference type="MGI" id="MGI:1353511">
    <property type="gene designation" value="Sspn"/>
</dbReference>
<dbReference type="eggNOG" id="ENOG502RYPH">
    <property type="taxonomic scope" value="Eukaryota"/>
</dbReference>
<dbReference type="InParanoid" id="Q62147"/>
<dbReference type="OrthoDB" id="10027693at2759"/>
<dbReference type="PhylomeDB" id="Q62147"/>
<dbReference type="Reactome" id="R-MMU-9913351">
    <property type="pathway name" value="Formation of the dystrophin-glycoprotein complex (DGC)"/>
</dbReference>
<dbReference type="BioGRID-ORCS" id="16651">
    <property type="hits" value="3 hits in 76 CRISPR screens"/>
</dbReference>
<dbReference type="ChiTaRS" id="Sspn">
    <property type="organism name" value="mouse"/>
</dbReference>
<dbReference type="PRO" id="PR:Q62147"/>
<dbReference type="Proteomes" id="UP000000589">
    <property type="component" value="Unplaced"/>
</dbReference>
<dbReference type="RNAct" id="Q62147">
    <property type="molecule type" value="protein"/>
</dbReference>
<dbReference type="GO" id="GO:0016010">
    <property type="term" value="C:dystrophin-associated glycoprotein complex"/>
    <property type="evidence" value="ECO:0007669"/>
    <property type="project" value="InterPro"/>
</dbReference>
<dbReference type="GO" id="GO:0005886">
    <property type="term" value="C:plasma membrane"/>
    <property type="evidence" value="ECO:0000314"/>
    <property type="project" value="MGI"/>
</dbReference>
<dbReference type="GO" id="GO:0045211">
    <property type="term" value="C:postsynaptic membrane"/>
    <property type="evidence" value="ECO:0007669"/>
    <property type="project" value="UniProtKB-SubCell"/>
</dbReference>
<dbReference type="GO" id="GO:0042383">
    <property type="term" value="C:sarcolemma"/>
    <property type="evidence" value="ECO:0000314"/>
    <property type="project" value="MGI"/>
</dbReference>
<dbReference type="GO" id="GO:0044877">
    <property type="term" value="F:protein-containing complex binding"/>
    <property type="evidence" value="ECO:0000314"/>
    <property type="project" value="MGI"/>
</dbReference>
<dbReference type="InterPro" id="IPR007237">
    <property type="entry name" value="CD20-like"/>
</dbReference>
<dbReference type="InterPro" id="IPR030429">
    <property type="entry name" value="Sarcospan"/>
</dbReference>
<dbReference type="PANTHER" id="PTHR15260">
    <property type="entry name" value="SARCOSPAN"/>
    <property type="match status" value="1"/>
</dbReference>
<dbReference type="PANTHER" id="PTHR15260:SF1">
    <property type="entry name" value="SARCOSPAN"/>
    <property type="match status" value="1"/>
</dbReference>
<dbReference type="Pfam" id="PF04103">
    <property type="entry name" value="CD20"/>
    <property type="match status" value="1"/>
</dbReference>
<evidence type="ECO:0000250" key="1"/>
<evidence type="ECO:0000255" key="2"/>
<evidence type="ECO:0000305" key="3"/>
<proteinExistence type="evidence at protein level"/>
<reference key="1">
    <citation type="journal article" date="1994" name="Genomics">
        <title>Characterization of a gene coamplified with Ki-ras in Y1 murine adrenal carcinoma cells that codes for a putative membrane protein.</title>
        <authorList>
            <person name="Scott A.F."/>
            <person name="Elizaga A."/>
            <person name="Morrell J."/>
            <person name="Bergen A."/>
            <person name="Penno M.B."/>
        </authorList>
    </citation>
    <scope>NUCLEOTIDE SEQUENCE [GENOMIC DNA / MRNA]</scope>
    <source>
        <strain>LAF</strain>
    </source>
</reference>
<reference key="2">
    <citation type="journal article" date="2010" name="Cell">
        <title>A tissue-specific atlas of mouse protein phosphorylation and expression.</title>
        <authorList>
            <person name="Huttlin E.L."/>
            <person name="Jedrychowski M.P."/>
            <person name="Elias J.E."/>
            <person name="Goswami T."/>
            <person name="Rad R."/>
            <person name="Beausoleil S.A."/>
            <person name="Villen J."/>
            <person name="Haas W."/>
            <person name="Sowa M.E."/>
            <person name="Gygi S.P."/>
        </authorList>
    </citation>
    <scope>IDENTIFICATION BY MASS SPECTROMETRY [LARGE SCALE ANALYSIS]</scope>
    <source>
        <tissue>Heart</tissue>
    </source>
</reference>
<keyword id="KW-0002">3D-structure</keyword>
<keyword id="KW-1003">Cell membrane</keyword>
<keyword id="KW-0472">Membrane</keyword>
<keyword id="KW-0628">Postsynaptic cell membrane</keyword>
<keyword id="KW-1185">Reference proteome</keyword>
<keyword id="KW-0770">Synapse</keyword>
<keyword id="KW-0812">Transmembrane</keyword>
<keyword id="KW-1133">Transmembrane helix</keyword>
<comment type="function">
    <text evidence="1">Component of the dystrophin-glycoprotein complex (DGC), a complex that spans the muscle plasma membrane and forms a link between the F-actin cytoskeleton and the extracellular matrix. Preferentially associates with the sarcoglycan subcomplex of the DGC (By similarity).</text>
</comment>
<comment type="subcellular location">
    <subcellularLocation>
        <location evidence="1">Cell membrane</location>
        <topology evidence="1">Multi-pass membrane protein</topology>
    </subcellularLocation>
    <subcellularLocation>
        <location evidence="1">Cell membrane</location>
        <location evidence="1">Sarcolemma</location>
    </subcellularLocation>
    <subcellularLocation>
        <location evidence="1">Postsynaptic cell membrane</location>
        <topology evidence="1">Multi-pass membrane protein</topology>
    </subcellularLocation>
    <text evidence="1">Also found in myotendinous junctions and in the postsynaptic membrane of neuromuscular junctions.</text>
</comment>
<gene>
    <name type="primary">Sspn</name>
    <name type="synonym">Krag</name>
</gene>
<feature type="chain" id="PRO_0000072227" description="Sarcospan">
    <location>
        <begin position="1"/>
        <end position="216"/>
    </location>
</feature>
<feature type="topological domain" description="Cytoplasmic" evidence="2">
    <location>
        <begin position="1"/>
        <end position="26"/>
    </location>
</feature>
<feature type="transmembrane region" description="Helical" evidence="2">
    <location>
        <begin position="27"/>
        <end position="47"/>
    </location>
</feature>
<feature type="topological domain" description="Extracellular" evidence="2">
    <location>
        <begin position="48"/>
        <end position="59"/>
    </location>
</feature>
<feature type="transmembrane region" description="Helical" evidence="2">
    <location>
        <begin position="60"/>
        <end position="80"/>
    </location>
</feature>
<feature type="topological domain" description="Cytoplasmic" evidence="2">
    <location>
        <begin position="81"/>
        <end position="95"/>
    </location>
</feature>
<feature type="transmembrane region" description="Helical" evidence="2">
    <location>
        <begin position="96"/>
        <end position="116"/>
    </location>
</feature>
<feature type="topological domain" description="Extracellular" evidence="2">
    <location>
        <begin position="117"/>
        <end position="166"/>
    </location>
</feature>
<feature type="transmembrane region" description="Helical" evidence="2">
    <location>
        <begin position="167"/>
        <end position="187"/>
    </location>
</feature>
<feature type="topological domain" description="Cytoplasmic" evidence="2">
    <location>
        <begin position="188"/>
        <end position="216"/>
    </location>
</feature>
<feature type="sequence conflict" description="In Ref. 1; AAA03712." evidence="3" ref="1">
    <original>S</original>
    <variation>I</variation>
    <location>
        <position position="65"/>
    </location>
</feature>